<comment type="function">
    <text evidence="1">Catalyzes a salvage reaction resulting in the formation of AMP, that is energically less costly than de novo synthesis.</text>
</comment>
<comment type="catalytic activity">
    <reaction evidence="1">
        <text>AMP + diphosphate = 5-phospho-alpha-D-ribose 1-diphosphate + adenine</text>
        <dbReference type="Rhea" id="RHEA:16609"/>
        <dbReference type="ChEBI" id="CHEBI:16708"/>
        <dbReference type="ChEBI" id="CHEBI:33019"/>
        <dbReference type="ChEBI" id="CHEBI:58017"/>
        <dbReference type="ChEBI" id="CHEBI:456215"/>
        <dbReference type="EC" id="2.4.2.7"/>
    </reaction>
</comment>
<comment type="pathway">
    <text evidence="1">Purine metabolism; AMP biosynthesis via salvage pathway; AMP from adenine: step 1/1.</text>
</comment>
<comment type="subunit">
    <text evidence="1">Homodimer.</text>
</comment>
<comment type="subcellular location">
    <subcellularLocation>
        <location evidence="1">Cytoplasm</location>
    </subcellularLocation>
</comment>
<comment type="similarity">
    <text evidence="1">Belongs to the purine/pyrimidine phosphoribosyltransferase family.</text>
</comment>
<proteinExistence type="inferred from homology"/>
<keyword id="KW-0963">Cytoplasm</keyword>
<keyword id="KW-0328">Glycosyltransferase</keyword>
<keyword id="KW-0660">Purine salvage</keyword>
<keyword id="KW-0808">Transferase</keyword>
<dbReference type="EC" id="2.4.2.7" evidence="1"/>
<dbReference type="EMBL" id="CP000444">
    <property type="protein sequence ID" value="ABI43314.1"/>
    <property type="molecule type" value="Genomic_DNA"/>
</dbReference>
<dbReference type="SMR" id="Q0HU91"/>
<dbReference type="KEGG" id="shm:Shewmr7_2327"/>
<dbReference type="HOGENOM" id="CLU_063339_3_0_6"/>
<dbReference type="UniPathway" id="UPA00588">
    <property type="reaction ID" value="UER00646"/>
</dbReference>
<dbReference type="GO" id="GO:0005737">
    <property type="term" value="C:cytoplasm"/>
    <property type="evidence" value="ECO:0007669"/>
    <property type="project" value="UniProtKB-SubCell"/>
</dbReference>
<dbReference type="GO" id="GO:0002055">
    <property type="term" value="F:adenine binding"/>
    <property type="evidence" value="ECO:0007669"/>
    <property type="project" value="TreeGrafter"/>
</dbReference>
<dbReference type="GO" id="GO:0003999">
    <property type="term" value="F:adenine phosphoribosyltransferase activity"/>
    <property type="evidence" value="ECO:0007669"/>
    <property type="project" value="UniProtKB-UniRule"/>
</dbReference>
<dbReference type="GO" id="GO:0016208">
    <property type="term" value="F:AMP binding"/>
    <property type="evidence" value="ECO:0007669"/>
    <property type="project" value="TreeGrafter"/>
</dbReference>
<dbReference type="GO" id="GO:0006168">
    <property type="term" value="P:adenine salvage"/>
    <property type="evidence" value="ECO:0007669"/>
    <property type="project" value="InterPro"/>
</dbReference>
<dbReference type="GO" id="GO:0044209">
    <property type="term" value="P:AMP salvage"/>
    <property type="evidence" value="ECO:0007669"/>
    <property type="project" value="UniProtKB-UniRule"/>
</dbReference>
<dbReference type="GO" id="GO:0006166">
    <property type="term" value="P:purine ribonucleoside salvage"/>
    <property type="evidence" value="ECO:0007669"/>
    <property type="project" value="UniProtKB-KW"/>
</dbReference>
<dbReference type="CDD" id="cd06223">
    <property type="entry name" value="PRTases_typeI"/>
    <property type="match status" value="1"/>
</dbReference>
<dbReference type="FunFam" id="3.40.50.2020:FF:000004">
    <property type="entry name" value="Adenine phosphoribosyltransferase"/>
    <property type="match status" value="1"/>
</dbReference>
<dbReference type="Gene3D" id="3.40.50.2020">
    <property type="match status" value="1"/>
</dbReference>
<dbReference type="HAMAP" id="MF_00004">
    <property type="entry name" value="Aden_phosphoribosyltr"/>
    <property type="match status" value="1"/>
</dbReference>
<dbReference type="InterPro" id="IPR005764">
    <property type="entry name" value="Ade_phspho_trans"/>
</dbReference>
<dbReference type="InterPro" id="IPR000836">
    <property type="entry name" value="PRibTrfase_dom"/>
</dbReference>
<dbReference type="InterPro" id="IPR029057">
    <property type="entry name" value="PRTase-like"/>
</dbReference>
<dbReference type="InterPro" id="IPR050054">
    <property type="entry name" value="UPRTase/APRTase"/>
</dbReference>
<dbReference type="NCBIfam" id="TIGR01090">
    <property type="entry name" value="apt"/>
    <property type="match status" value="1"/>
</dbReference>
<dbReference type="NCBIfam" id="NF002632">
    <property type="entry name" value="PRK02304.1-1"/>
    <property type="match status" value="1"/>
</dbReference>
<dbReference type="NCBIfam" id="NF002634">
    <property type="entry name" value="PRK02304.1-3"/>
    <property type="match status" value="1"/>
</dbReference>
<dbReference type="NCBIfam" id="NF002636">
    <property type="entry name" value="PRK02304.1-5"/>
    <property type="match status" value="1"/>
</dbReference>
<dbReference type="PANTHER" id="PTHR32315">
    <property type="entry name" value="ADENINE PHOSPHORIBOSYLTRANSFERASE"/>
    <property type="match status" value="1"/>
</dbReference>
<dbReference type="PANTHER" id="PTHR32315:SF3">
    <property type="entry name" value="ADENINE PHOSPHORIBOSYLTRANSFERASE"/>
    <property type="match status" value="1"/>
</dbReference>
<dbReference type="Pfam" id="PF00156">
    <property type="entry name" value="Pribosyltran"/>
    <property type="match status" value="1"/>
</dbReference>
<dbReference type="SUPFAM" id="SSF53271">
    <property type="entry name" value="PRTase-like"/>
    <property type="match status" value="1"/>
</dbReference>
<dbReference type="PROSITE" id="PS00103">
    <property type="entry name" value="PUR_PYR_PR_TRANSFER"/>
    <property type="match status" value="1"/>
</dbReference>
<name>APT_SHESR</name>
<accession>Q0HU91</accession>
<feature type="chain" id="PRO_0000321409" description="Adenine phosphoribosyltransferase">
    <location>
        <begin position="1"/>
        <end position="183"/>
    </location>
</feature>
<organism>
    <name type="scientific">Shewanella sp. (strain MR-7)</name>
    <dbReference type="NCBI Taxonomy" id="60481"/>
    <lineage>
        <taxon>Bacteria</taxon>
        <taxon>Pseudomonadati</taxon>
        <taxon>Pseudomonadota</taxon>
        <taxon>Gammaproteobacteria</taxon>
        <taxon>Alteromonadales</taxon>
        <taxon>Shewanellaceae</taxon>
        <taxon>Shewanella</taxon>
    </lineage>
</organism>
<sequence>MAMNTETLSLIKQSIKTIPNYPKEGILFRDVTSLLENAVAYKATIDLLVEQYRNKGFTKIVGTEARGFLFGAPLALELGIGFVPVRKPGKLPRATISQSYELEYGHDSLEIHTDAITANDKVLVVDDLLATGGTIEATVKLIRQLGGEVQDAAFVISLPDLGGEARLTALGLELVKLCEFEGE</sequence>
<evidence type="ECO:0000255" key="1">
    <source>
        <dbReference type="HAMAP-Rule" id="MF_00004"/>
    </source>
</evidence>
<reference key="1">
    <citation type="submission" date="2006-08" db="EMBL/GenBank/DDBJ databases">
        <title>Complete sequence of chromosome 1 of Shewanella sp. MR-7.</title>
        <authorList>
            <person name="Copeland A."/>
            <person name="Lucas S."/>
            <person name="Lapidus A."/>
            <person name="Barry K."/>
            <person name="Detter J.C."/>
            <person name="Glavina del Rio T."/>
            <person name="Hammon N."/>
            <person name="Israni S."/>
            <person name="Dalin E."/>
            <person name="Tice H."/>
            <person name="Pitluck S."/>
            <person name="Kiss H."/>
            <person name="Brettin T."/>
            <person name="Bruce D."/>
            <person name="Han C."/>
            <person name="Tapia R."/>
            <person name="Gilna P."/>
            <person name="Schmutz J."/>
            <person name="Larimer F."/>
            <person name="Land M."/>
            <person name="Hauser L."/>
            <person name="Kyrpides N."/>
            <person name="Mikhailova N."/>
            <person name="Nealson K."/>
            <person name="Konstantinidis K."/>
            <person name="Klappenbach J."/>
            <person name="Tiedje J."/>
            <person name="Richardson P."/>
        </authorList>
    </citation>
    <scope>NUCLEOTIDE SEQUENCE [LARGE SCALE GENOMIC DNA]</scope>
    <source>
        <strain>MR-7</strain>
    </source>
</reference>
<protein>
    <recommendedName>
        <fullName evidence="1">Adenine phosphoribosyltransferase</fullName>
        <shortName evidence="1">APRT</shortName>
        <ecNumber evidence="1">2.4.2.7</ecNumber>
    </recommendedName>
</protein>
<gene>
    <name evidence="1" type="primary">apt</name>
    <name type="ordered locus">Shewmr7_2327</name>
</gene>